<feature type="chain" id="PRO_5000146960" description="Bidirectional sugar transporter N3" evidence="2">
    <location>
        <begin position="1"/>
        <end position="268"/>
    </location>
</feature>
<feature type="topological domain" description="Extracellular" evidence="2">
    <location>
        <begin position="1"/>
        <end position="7"/>
    </location>
</feature>
<feature type="transmembrane region" description="Helical; Name=1" evidence="2">
    <location>
        <begin position="8"/>
        <end position="28"/>
    </location>
</feature>
<feature type="topological domain" description="Cytoplasmic" evidence="2">
    <location>
        <begin position="29"/>
        <end position="42"/>
    </location>
</feature>
<feature type="transmembrane region" description="Helical; Name=2" evidence="2">
    <location>
        <begin position="43"/>
        <end position="63"/>
    </location>
</feature>
<feature type="topological domain" description="Extracellular" evidence="2">
    <location>
        <begin position="64"/>
        <end position="70"/>
    </location>
</feature>
<feature type="transmembrane region" description="Helical; Name=3" evidence="2">
    <location>
        <begin position="71"/>
        <end position="91"/>
    </location>
</feature>
<feature type="topological domain" description="Cytoplasmic" evidence="2">
    <location>
        <begin position="92"/>
        <end position="103"/>
    </location>
</feature>
<feature type="transmembrane region" description="Helical; Name=4" evidence="2">
    <location>
        <begin position="104"/>
        <end position="124"/>
    </location>
</feature>
<feature type="topological domain" description="Extracellular" evidence="2">
    <location>
        <begin position="125"/>
        <end position="131"/>
    </location>
</feature>
<feature type="transmembrane region" description="Helical; Name=5" evidence="2">
    <location>
        <begin position="132"/>
        <end position="152"/>
    </location>
</feature>
<feature type="topological domain" description="Cytoplasmic" evidence="2">
    <location>
        <begin position="153"/>
        <end position="165"/>
    </location>
</feature>
<feature type="transmembrane region" description="Helical; Name=6" evidence="2">
    <location>
        <begin position="166"/>
        <end position="186"/>
    </location>
</feature>
<feature type="topological domain" description="Extracellular" evidence="2">
    <location>
        <begin position="187"/>
        <end position="190"/>
    </location>
</feature>
<feature type="transmembrane region" description="Helical; Name=7" evidence="2">
    <location>
        <begin position="191"/>
        <end position="211"/>
    </location>
</feature>
<feature type="topological domain" description="Cytoplasmic" evidence="2">
    <location>
        <begin position="212"/>
        <end position="268"/>
    </location>
</feature>
<feature type="domain" description="MtN3/slv 1">
    <location>
        <begin position="10"/>
        <end position="96"/>
    </location>
</feature>
<feature type="domain" description="MtN3/slv 2">
    <location>
        <begin position="131"/>
        <end position="214"/>
    </location>
</feature>
<feature type="region of interest" description="Disordered" evidence="3">
    <location>
        <begin position="243"/>
        <end position="268"/>
    </location>
</feature>
<feature type="coiled-coil region" evidence="2">
    <location>
        <begin position="234"/>
        <end position="262"/>
    </location>
</feature>
<feature type="compositionally biased region" description="Basic and acidic residues" evidence="3">
    <location>
        <begin position="243"/>
        <end position="262"/>
    </location>
</feature>
<protein>
    <recommendedName>
        <fullName>Bidirectional sugar transporter N3</fullName>
    </recommendedName>
    <alternativeName>
        <fullName>Nodulin 3</fullName>
        <shortName>MtN3</shortName>
        <shortName>N-3</shortName>
    </alternativeName>
</protein>
<sequence>MAISHNTLAFTFGMLGNVISFLVFLAPISTFYRIYKKKSTEGFQSLPYLVALFSSMLWLYYALLKKDAFLLITINSFGCVVETIYIILYIIYAPRDARNLTFKLLSAMNVGSFALILIVTNYAVHGPLRVQVLGWVCVSLSVSVFAAPLSIVAQVVRTKSVEFMPFNLSFTLTLSATMWFGYGFFLKDICIXLPNVLGXVLGLLQMLLYAIYRNGGEKAMKKEKKAPIEPPKSIVIETQLEKIEQEKKNKDDDNEEKDKSEEPIGCGV</sequence>
<proteinExistence type="evidence at transcript level"/>
<dbReference type="EMBL" id="Y08726">
    <property type="protein sequence ID" value="CAA69976.1"/>
    <property type="molecule type" value="mRNA"/>
</dbReference>
<dbReference type="TCDB" id="2.A.123.1.1">
    <property type="family name" value="the sweet, pq-loop, saliva, mtn3 (sweet) family"/>
</dbReference>
<dbReference type="ExpressionAtlas" id="P93332">
    <property type="expression patterns" value="differential"/>
</dbReference>
<dbReference type="GO" id="GO:0005886">
    <property type="term" value="C:plasma membrane"/>
    <property type="evidence" value="ECO:0000250"/>
    <property type="project" value="UniProtKB"/>
</dbReference>
<dbReference type="GO" id="GO:0051119">
    <property type="term" value="F:sugar transmembrane transporter activity"/>
    <property type="evidence" value="ECO:0000250"/>
    <property type="project" value="UniProtKB"/>
</dbReference>
<dbReference type="FunFam" id="1.20.1280.290:FF:000001">
    <property type="entry name" value="Bidirectional sugar transporter SWEET"/>
    <property type="match status" value="1"/>
</dbReference>
<dbReference type="FunFam" id="1.20.1280.290:FF:000003">
    <property type="entry name" value="Bidirectional sugar transporter SWEET"/>
    <property type="match status" value="1"/>
</dbReference>
<dbReference type="Gene3D" id="1.20.1280.290">
    <property type="match status" value="2"/>
</dbReference>
<dbReference type="InterPro" id="IPR047664">
    <property type="entry name" value="SWEET"/>
</dbReference>
<dbReference type="InterPro" id="IPR004316">
    <property type="entry name" value="SWEET_rpt"/>
</dbReference>
<dbReference type="PANTHER" id="PTHR10791:SF222">
    <property type="entry name" value="BIDIRECTIONAL SUGAR TRANSPORTER SWEET15"/>
    <property type="match status" value="1"/>
</dbReference>
<dbReference type="PANTHER" id="PTHR10791">
    <property type="entry name" value="RAG1-ACTIVATING PROTEIN 1"/>
    <property type="match status" value="1"/>
</dbReference>
<dbReference type="Pfam" id="PF03083">
    <property type="entry name" value="MtN3_slv"/>
    <property type="match status" value="2"/>
</dbReference>
<evidence type="ECO:0000250" key="1">
    <source>
        <dbReference type="UniProtKB" id="Q8L9J7"/>
    </source>
</evidence>
<evidence type="ECO:0000255" key="2"/>
<evidence type="ECO:0000256" key="3">
    <source>
        <dbReference type="SAM" id="MobiDB-lite"/>
    </source>
</evidence>
<evidence type="ECO:0000269" key="4">
    <source>
    </source>
</evidence>
<evidence type="ECO:0000305" key="5"/>
<comment type="function">
    <text evidence="1">Mediates both low-affinity uptake and efflux of sugar across the plasma membrane.</text>
</comment>
<comment type="subunit">
    <text evidence="1">Forms homooligomers and/or heterooligomers.</text>
</comment>
<comment type="subcellular location">
    <subcellularLocation>
        <location evidence="1">Cell membrane</location>
        <topology evidence="1">Multi-pass membrane protein</topology>
    </subcellularLocation>
</comment>
<comment type="developmental stage">
    <text evidence="4">Accumulates rapidly but transiently before nodule emergence and in the first days of nodulation. Later disappears in two-week-old nodules.</text>
</comment>
<comment type="induction">
    <text evidence="4">During nodulation.</text>
</comment>
<comment type="similarity">
    <text evidence="5">Belongs to the SWEET sugar transporter family.</text>
</comment>
<name>NOD3_MEDTR</name>
<gene>
    <name type="primary">N3</name>
</gene>
<accession>P93332</accession>
<organism>
    <name type="scientific">Medicago truncatula</name>
    <name type="common">Barrel medic</name>
    <name type="synonym">Medicago tribuloides</name>
    <dbReference type="NCBI Taxonomy" id="3880"/>
    <lineage>
        <taxon>Eukaryota</taxon>
        <taxon>Viridiplantae</taxon>
        <taxon>Streptophyta</taxon>
        <taxon>Embryophyta</taxon>
        <taxon>Tracheophyta</taxon>
        <taxon>Spermatophyta</taxon>
        <taxon>Magnoliopsida</taxon>
        <taxon>eudicotyledons</taxon>
        <taxon>Gunneridae</taxon>
        <taxon>Pentapetalae</taxon>
        <taxon>rosids</taxon>
        <taxon>fabids</taxon>
        <taxon>Fabales</taxon>
        <taxon>Fabaceae</taxon>
        <taxon>Papilionoideae</taxon>
        <taxon>50 kb inversion clade</taxon>
        <taxon>NPAAA clade</taxon>
        <taxon>Hologalegina</taxon>
        <taxon>IRL clade</taxon>
        <taxon>Trifolieae</taxon>
        <taxon>Medicago</taxon>
    </lineage>
</organism>
<reference key="1">
    <citation type="journal article" date="1996" name="Mol. Plant Microbe Interact.">
        <title>Use of a subtractive hybridization approach to identify new Medicago truncatula genes induced during root nodule development.</title>
        <authorList>
            <person name="Gamas P."/>
            <person name="de Carvalho Niebel F."/>
            <person name="Lescure N."/>
            <person name="Cullimore J."/>
        </authorList>
    </citation>
    <scope>NUCLEOTIDE SEQUENCE [MRNA]</scope>
    <scope>DEVELOPMENTAL STAGE</scope>
    <scope>INDUCTION DURING NODULATION</scope>
    <source>
        <strain>cv. Jemalong J5</strain>
        <tissue>Root nodule</tissue>
    </source>
</reference>
<keyword id="KW-1003">Cell membrane</keyword>
<keyword id="KW-0175">Coiled coil</keyword>
<keyword id="KW-0472">Membrane</keyword>
<keyword id="KW-0677">Repeat</keyword>
<keyword id="KW-0762">Sugar transport</keyword>
<keyword id="KW-0812">Transmembrane</keyword>
<keyword id="KW-1133">Transmembrane helix</keyword>
<keyword id="KW-0813">Transport</keyword>